<gene>
    <name type="ordered locus">HI_1126.1</name>
</gene>
<feature type="chain" id="PRO_0000190051" description="Uncharacterized membrane protein HI_1126.1">
    <location>
        <begin position="1"/>
        <end position="371"/>
    </location>
</feature>
<feature type="transmembrane region" description="Helical" evidence="1">
    <location>
        <begin position="4"/>
        <end position="24"/>
    </location>
</feature>
<feature type="transmembrane region" description="Helical" evidence="1">
    <location>
        <begin position="60"/>
        <end position="82"/>
    </location>
</feature>
<feature type="transmembrane region" description="Helical" evidence="1">
    <location>
        <begin position="87"/>
        <end position="109"/>
    </location>
</feature>
<feature type="transmembrane region" description="Helical" evidence="1">
    <location>
        <begin position="130"/>
        <end position="150"/>
    </location>
</feature>
<feature type="transmembrane region" description="Helical" evidence="1">
    <location>
        <begin position="197"/>
        <end position="217"/>
    </location>
</feature>
<feature type="transmembrane region" description="Helical" evidence="1">
    <location>
        <begin position="224"/>
        <end position="244"/>
    </location>
</feature>
<feature type="transmembrane region" description="Helical" evidence="1">
    <location>
        <begin position="282"/>
        <end position="302"/>
    </location>
</feature>
<feature type="transmembrane region" description="Helical" evidence="1">
    <location>
        <begin position="320"/>
        <end position="340"/>
    </location>
</feature>
<name>Y112B_HAEIN</name>
<proteinExistence type="inferred from homology"/>
<reference key="1">
    <citation type="journal article" date="1995" name="Science">
        <title>Whole-genome random sequencing and assembly of Haemophilus influenzae Rd.</title>
        <authorList>
            <person name="Fleischmann R.D."/>
            <person name="Adams M.D."/>
            <person name="White O."/>
            <person name="Clayton R.A."/>
            <person name="Kirkness E.F."/>
            <person name="Kerlavage A.R."/>
            <person name="Bult C.J."/>
            <person name="Tomb J.-F."/>
            <person name="Dougherty B.A."/>
            <person name="Merrick J.M."/>
            <person name="McKenney K."/>
            <person name="Sutton G.G."/>
            <person name="FitzHugh W."/>
            <person name="Fields C.A."/>
            <person name="Gocayne J.D."/>
            <person name="Scott J.D."/>
            <person name="Shirley R."/>
            <person name="Liu L.-I."/>
            <person name="Glodek A."/>
            <person name="Kelley J.M."/>
            <person name="Weidman J.F."/>
            <person name="Phillips C.A."/>
            <person name="Spriggs T."/>
            <person name="Hedblom E."/>
            <person name="Cotton M.D."/>
            <person name="Utterback T.R."/>
            <person name="Hanna M.C."/>
            <person name="Nguyen D.T."/>
            <person name="Saudek D.M."/>
            <person name="Brandon R.C."/>
            <person name="Fine L.D."/>
            <person name="Fritchman J.L."/>
            <person name="Fuhrmann J.L."/>
            <person name="Geoghagen N.S.M."/>
            <person name="Gnehm C.L."/>
            <person name="McDonald L.A."/>
            <person name="Small K.V."/>
            <person name="Fraser C.M."/>
            <person name="Smith H.O."/>
            <person name="Venter J.C."/>
        </authorList>
    </citation>
    <scope>NUCLEOTIDE SEQUENCE [LARGE SCALE GENOMIC DNA]</scope>
    <source>
        <strain>ATCC 51907 / DSM 11121 / KW20 / Rd</strain>
    </source>
</reference>
<reference key="2">
    <citation type="submission" date="1998-05" db="EMBL/GenBank/DDBJ databases">
        <authorList>
            <person name="White O."/>
            <person name="Clayton R.A."/>
            <person name="Kerlavage A.R."/>
            <person name="Fleischmann R.D."/>
            <person name="Peterson J."/>
            <person name="Hickey E."/>
            <person name="Dodson R."/>
            <person name="Gwinn M."/>
        </authorList>
    </citation>
    <scope>IDENTIFICATION</scope>
</reference>
<evidence type="ECO:0000255" key="1"/>
<evidence type="ECO:0000305" key="2"/>
<keyword id="KW-1003">Cell membrane</keyword>
<keyword id="KW-0472">Membrane</keyword>
<keyword id="KW-1185">Reference proteome</keyword>
<keyword id="KW-0812">Transmembrane</keyword>
<keyword id="KW-1133">Transmembrane helix</keyword>
<sequence>MRSLPMLWFFFCVTVLIIGYFIYGKIIEKIFVINPKRQTPAYQVNDGVDYMPMSKTKIWLIQLLNIAGTGPIFGPILGALYGPVAMLWIVIGCIFAGAVHDYFCGMLSIRHGGATMPYLAGKFLGRPVKVFINTLALVLLLLVGVVFVASPAQLMGTITMDVFGVSQGALVLGDAEAVHHSVEAGGIKVWGMDKATVVAVWTAIIFAYYILATLLPVDKIIGRIYPLFGALLLFMSVGMVYGLVVSHFSATDPIEFFRTINADGEGLTWAKFTQNFQVKGDVPIWPLLFLTISCGALSGFHATQTPLMARCTENESEGRFIFYGAMITEGVIALVWCMVGLAFYENPQALQDAISAGCSMLKLCMIVRYIS</sequence>
<protein>
    <recommendedName>
        <fullName>Uncharacterized membrane protein HI_1126.1</fullName>
    </recommendedName>
</protein>
<organism>
    <name type="scientific">Haemophilus influenzae (strain ATCC 51907 / DSM 11121 / KW20 / Rd)</name>
    <dbReference type="NCBI Taxonomy" id="71421"/>
    <lineage>
        <taxon>Bacteria</taxon>
        <taxon>Pseudomonadati</taxon>
        <taxon>Pseudomonadota</taxon>
        <taxon>Gammaproteobacteria</taxon>
        <taxon>Pasteurellales</taxon>
        <taxon>Pasteurellaceae</taxon>
        <taxon>Haemophilus</taxon>
    </lineage>
</organism>
<dbReference type="EMBL" id="L42023">
    <property type="protein sequence ID" value="AAC22781.1"/>
    <property type="molecule type" value="Genomic_DNA"/>
</dbReference>
<dbReference type="STRING" id="71421.HI_1126.1"/>
<dbReference type="EnsemblBacteria" id="AAC22781">
    <property type="protein sequence ID" value="AAC22781"/>
    <property type="gene ID" value="HI_1126.1"/>
</dbReference>
<dbReference type="KEGG" id="hin:HI_1126.1"/>
<dbReference type="eggNOG" id="COG1966">
    <property type="taxonomic scope" value="Bacteria"/>
</dbReference>
<dbReference type="HOGENOM" id="CLU_010531_3_0_6"/>
<dbReference type="PhylomeDB" id="O86233"/>
<dbReference type="Proteomes" id="UP000000579">
    <property type="component" value="Chromosome"/>
</dbReference>
<dbReference type="GO" id="GO:0005886">
    <property type="term" value="C:plasma membrane"/>
    <property type="evidence" value="ECO:0007669"/>
    <property type="project" value="UniProtKB-SubCell"/>
</dbReference>
<dbReference type="GO" id="GO:0009267">
    <property type="term" value="P:cellular response to starvation"/>
    <property type="evidence" value="ECO:0007669"/>
    <property type="project" value="InterPro"/>
</dbReference>
<dbReference type="InterPro" id="IPR051605">
    <property type="entry name" value="CstA"/>
</dbReference>
<dbReference type="InterPro" id="IPR003706">
    <property type="entry name" value="CstA_N"/>
</dbReference>
<dbReference type="PANTHER" id="PTHR30252:SF4">
    <property type="entry name" value="CARBON STARVATION"/>
    <property type="match status" value="1"/>
</dbReference>
<dbReference type="PANTHER" id="PTHR30252">
    <property type="entry name" value="INNER MEMBRANE PEPTIDE TRANSPORTER"/>
    <property type="match status" value="1"/>
</dbReference>
<dbReference type="Pfam" id="PF02554">
    <property type="entry name" value="CstA"/>
    <property type="match status" value="2"/>
</dbReference>
<comment type="subcellular location">
    <subcellularLocation>
        <location evidence="2">Cell membrane</location>
        <topology evidence="1">Multi-pass membrane protein</topology>
    </subcellularLocation>
</comment>
<comment type="similarity">
    <text evidence="2">Belongs to the peptide transporter carbon starvation (CstA) (TC 2.A.114) family.</text>
</comment>
<accession>O86233</accession>